<sequence length="188" mass="21143">MKIGVLGVQGDVREHVEALHKLGVETLIVKLPEHLDMVDGLILPGGESTTMIRILKEMNMDEKLVEKINDGLPVFATCAGVILLAKRINNYKQEKLGVLDVTVERNAYGRQVESFETFIEIPAIGKDPFRAIFIRAPRIVETGRSVEILAYHEGDPVLVKEGKILASTFHPELTDDLRLHRYFLEMVK</sequence>
<organism>
    <name type="scientific">Thermotoga neapolitana (strain ATCC 49049 / DSM 4359 / NBRC 107923 / NS-E)</name>
    <dbReference type="NCBI Taxonomy" id="309803"/>
    <lineage>
        <taxon>Bacteria</taxon>
        <taxon>Thermotogati</taxon>
        <taxon>Thermotogota</taxon>
        <taxon>Thermotogae</taxon>
        <taxon>Thermotogales</taxon>
        <taxon>Thermotogaceae</taxon>
        <taxon>Thermotoga</taxon>
    </lineage>
</organism>
<accession>B9KBI1</accession>
<feature type="chain" id="PRO_1000185909" description="Pyridoxal 5'-phosphate synthase subunit PdxT">
    <location>
        <begin position="1"/>
        <end position="188"/>
    </location>
</feature>
<feature type="active site" description="Nucleophile" evidence="1">
    <location>
        <position position="78"/>
    </location>
</feature>
<feature type="active site" description="Charge relay system" evidence="1">
    <location>
        <position position="170"/>
    </location>
</feature>
<feature type="active site" description="Charge relay system" evidence="1">
    <location>
        <position position="172"/>
    </location>
</feature>
<feature type="binding site" evidence="1">
    <location>
        <begin position="46"/>
        <end position="48"/>
    </location>
    <ligand>
        <name>L-glutamine</name>
        <dbReference type="ChEBI" id="CHEBI:58359"/>
    </ligand>
</feature>
<feature type="binding site" evidence="1">
    <location>
        <position position="105"/>
    </location>
    <ligand>
        <name>L-glutamine</name>
        <dbReference type="ChEBI" id="CHEBI:58359"/>
    </ligand>
</feature>
<feature type="binding site" evidence="1">
    <location>
        <begin position="134"/>
        <end position="135"/>
    </location>
    <ligand>
        <name>L-glutamine</name>
        <dbReference type="ChEBI" id="CHEBI:58359"/>
    </ligand>
</feature>
<comment type="function">
    <text evidence="1">Catalyzes the hydrolysis of glutamine to glutamate and ammonia as part of the biosynthesis of pyridoxal 5'-phosphate. The resulting ammonia molecule is channeled to the active site of PdxS.</text>
</comment>
<comment type="catalytic activity">
    <reaction evidence="1">
        <text>aldehydo-D-ribose 5-phosphate + D-glyceraldehyde 3-phosphate + L-glutamine = pyridoxal 5'-phosphate + L-glutamate + phosphate + 3 H2O + H(+)</text>
        <dbReference type="Rhea" id="RHEA:31507"/>
        <dbReference type="ChEBI" id="CHEBI:15377"/>
        <dbReference type="ChEBI" id="CHEBI:15378"/>
        <dbReference type="ChEBI" id="CHEBI:29985"/>
        <dbReference type="ChEBI" id="CHEBI:43474"/>
        <dbReference type="ChEBI" id="CHEBI:58273"/>
        <dbReference type="ChEBI" id="CHEBI:58359"/>
        <dbReference type="ChEBI" id="CHEBI:59776"/>
        <dbReference type="ChEBI" id="CHEBI:597326"/>
        <dbReference type="EC" id="4.3.3.6"/>
    </reaction>
</comment>
<comment type="catalytic activity">
    <reaction evidence="1">
        <text>L-glutamine + H2O = L-glutamate + NH4(+)</text>
        <dbReference type="Rhea" id="RHEA:15889"/>
        <dbReference type="ChEBI" id="CHEBI:15377"/>
        <dbReference type="ChEBI" id="CHEBI:28938"/>
        <dbReference type="ChEBI" id="CHEBI:29985"/>
        <dbReference type="ChEBI" id="CHEBI:58359"/>
        <dbReference type="EC" id="3.5.1.2"/>
    </reaction>
</comment>
<comment type="pathway">
    <text evidence="1">Cofactor biosynthesis; pyridoxal 5'-phosphate biosynthesis.</text>
</comment>
<comment type="subunit">
    <text evidence="1">In the presence of PdxS, forms a dodecamer of heterodimers. Only shows activity in the heterodimer.</text>
</comment>
<comment type="similarity">
    <text evidence="1">Belongs to the glutaminase PdxT/SNO family.</text>
</comment>
<name>PDXT_THENN</name>
<protein>
    <recommendedName>
        <fullName evidence="1">Pyridoxal 5'-phosphate synthase subunit PdxT</fullName>
        <ecNumber evidence="1">4.3.3.6</ecNumber>
    </recommendedName>
    <alternativeName>
        <fullName evidence="1">Pdx2</fullName>
    </alternativeName>
    <alternativeName>
        <fullName evidence="1">Pyridoxal 5'-phosphate synthase glutaminase subunit</fullName>
        <ecNumber evidence="1">3.5.1.2</ecNumber>
    </alternativeName>
</protein>
<keyword id="KW-0315">Glutamine amidotransferase</keyword>
<keyword id="KW-0378">Hydrolase</keyword>
<keyword id="KW-0456">Lyase</keyword>
<keyword id="KW-0663">Pyridoxal phosphate</keyword>
<proteinExistence type="inferred from homology"/>
<dbReference type="EC" id="4.3.3.6" evidence="1"/>
<dbReference type="EC" id="3.5.1.2" evidence="1"/>
<dbReference type="EMBL" id="CP000916">
    <property type="protein sequence ID" value="ACM22377.1"/>
    <property type="molecule type" value="Genomic_DNA"/>
</dbReference>
<dbReference type="RefSeq" id="WP_012645087.1">
    <property type="nucleotide sequence ID" value="NC_011978.1"/>
</dbReference>
<dbReference type="SMR" id="B9KBI1"/>
<dbReference type="STRING" id="309803.CTN_0200"/>
<dbReference type="MEROPS" id="C26.A32"/>
<dbReference type="KEGG" id="tna:CTN_0200"/>
<dbReference type="eggNOG" id="COG0311">
    <property type="taxonomic scope" value="Bacteria"/>
</dbReference>
<dbReference type="HOGENOM" id="CLU_069674_2_0_0"/>
<dbReference type="UniPathway" id="UPA00245"/>
<dbReference type="Proteomes" id="UP000000445">
    <property type="component" value="Chromosome"/>
</dbReference>
<dbReference type="GO" id="GO:0005829">
    <property type="term" value="C:cytosol"/>
    <property type="evidence" value="ECO:0007669"/>
    <property type="project" value="TreeGrafter"/>
</dbReference>
<dbReference type="GO" id="GO:1903600">
    <property type="term" value="C:glutaminase complex"/>
    <property type="evidence" value="ECO:0007669"/>
    <property type="project" value="TreeGrafter"/>
</dbReference>
<dbReference type="GO" id="GO:0004359">
    <property type="term" value="F:glutaminase activity"/>
    <property type="evidence" value="ECO:0007669"/>
    <property type="project" value="UniProtKB-UniRule"/>
</dbReference>
<dbReference type="GO" id="GO:0036381">
    <property type="term" value="F:pyridoxal 5'-phosphate synthase (glutamine hydrolysing) activity"/>
    <property type="evidence" value="ECO:0007669"/>
    <property type="project" value="UniProtKB-UniRule"/>
</dbReference>
<dbReference type="GO" id="GO:0006543">
    <property type="term" value="P:glutamine catabolic process"/>
    <property type="evidence" value="ECO:0007669"/>
    <property type="project" value="UniProtKB-UniRule"/>
</dbReference>
<dbReference type="GO" id="GO:0042823">
    <property type="term" value="P:pyridoxal phosphate biosynthetic process"/>
    <property type="evidence" value="ECO:0007669"/>
    <property type="project" value="UniProtKB-UniRule"/>
</dbReference>
<dbReference type="GO" id="GO:0008614">
    <property type="term" value="P:pyridoxine metabolic process"/>
    <property type="evidence" value="ECO:0007669"/>
    <property type="project" value="TreeGrafter"/>
</dbReference>
<dbReference type="CDD" id="cd01749">
    <property type="entry name" value="GATase1_PB"/>
    <property type="match status" value="1"/>
</dbReference>
<dbReference type="FunFam" id="3.40.50.880:FF:000041">
    <property type="entry name" value="Glutamine amidotransferase subunit pdxT, putative"/>
    <property type="match status" value="1"/>
</dbReference>
<dbReference type="Gene3D" id="3.40.50.880">
    <property type="match status" value="1"/>
</dbReference>
<dbReference type="HAMAP" id="MF_01615">
    <property type="entry name" value="PdxT"/>
    <property type="match status" value="1"/>
</dbReference>
<dbReference type="InterPro" id="IPR029062">
    <property type="entry name" value="Class_I_gatase-like"/>
</dbReference>
<dbReference type="InterPro" id="IPR002161">
    <property type="entry name" value="PdxT/SNO"/>
</dbReference>
<dbReference type="InterPro" id="IPR021196">
    <property type="entry name" value="PdxT/SNO_CS"/>
</dbReference>
<dbReference type="NCBIfam" id="TIGR03800">
    <property type="entry name" value="PLP_synth_Pdx2"/>
    <property type="match status" value="1"/>
</dbReference>
<dbReference type="PANTHER" id="PTHR31559">
    <property type="entry name" value="PYRIDOXAL 5'-PHOSPHATE SYNTHASE SUBUNIT SNO"/>
    <property type="match status" value="1"/>
</dbReference>
<dbReference type="PANTHER" id="PTHR31559:SF0">
    <property type="entry name" value="PYRIDOXAL 5'-PHOSPHATE SYNTHASE SUBUNIT SNO1-RELATED"/>
    <property type="match status" value="1"/>
</dbReference>
<dbReference type="Pfam" id="PF01174">
    <property type="entry name" value="SNO"/>
    <property type="match status" value="1"/>
</dbReference>
<dbReference type="PIRSF" id="PIRSF005639">
    <property type="entry name" value="Glut_amidoT_SNO"/>
    <property type="match status" value="1"/>
</dbReference>
<dbReference type="SUPFAM" id="SSF52317">
    <property type="entry name" value="Class I glutamine amidotransferase-like"/>
    <property type="match status" value="1"/>
</dbReference>
<dbReference type="PROSITE" id="PS01236">
    <property type="entry name" value="PDXT_SNO_1"/>
    <property type="match status" value="1"/>
</dbReference>
<dbReference type="PROSITE" id="PS51130">
    <property type="entry name" value="PDXT_SNO_2"/>
    <property type="match status" value="1"/>
</dbReference>
<reference key="1">
    <citation type="submission" date="2007-11" db="EMBL/GenBank/DDBJ databases">
        <title>The genome sequence of the hyperthermophilic bacterium Thermotoga neapolitana.</title>
        <authorList>
            <person name="Lim S.K."/>
            <person name="Kim J.S."/>
            <person name="Cha S.H."/>
            <person name="Park B.C."/>
            <person name="Lee D.S."/>
            <person name="Tae H.S."/>
            <person name="Kim S.-J."/>
            <person name="Kim J.J."/>
            <person name="Park K.J."/>
            <person name="Lee S.Y."/>
        </authorList>
    </citation>
    <scope>NUCLEOTIDE SEQUENCE [LARGE SCALE GENOMIC DNA]</scope>
    <source>
        <strain>ATCC 49049 / DSM 4359 / NBRC 107923 / NS-E</strain>
    </source>
</reference>
<gene>
    <name evidence="1" type="primary">pdxT</name>
    <name type="ordered locus">CTN_0200</name>
</gene>
<evidence type="ECO:0000255" key="1">
    <source>
        <dbReference type="HAMAP-Rule" id="MF_01615"/>
    </source>
</evidence>